<accession>Q4P902</accession>
<accession>A0A0D1C3K5</accession>
<keyword id="KW-0119">Carbohydrate metabolism</keyword>
<keyword id="KW-1015">Disulfide bond</keyword>
<keyword id="KW-0325">Glycoprotein</keyword>
<keyword id="KW-0326">Glycosidase</keyword>
<keyword id="KW-0378">Hydrolase</keyword>
<keyword id="KW-0624">Polysaccharide degradation</keyword>
<keyword id="KW-1185">Reference proteome</keyword>
<keyword id="KW-0964">Secreted</keyword>
<keyword id="KW-0732">Signal</keyword>
<keyword id="KW-0858">Xylan degradation</keyword>
<evidence type="ECO:0000250" key="1"/>
<evidence type="ECO:0000255" key="2"/>
<evidence type="ECO:0000255" key="3">
    <source>
        <dbReference type="PROSITE-ProRule" id="PRU01096"/>
    </source>
</evidence>
<evidence type="ECO:0000269" key="4">
    <source>
    </source>
</evidence>
<evidence type="ECO:0000269" key="5">
    <source>
    </source>
</evidence>
<evidence type="ECO:0000269" key="6">
    <source>
    </source>
</evidence>
<evidence type="ECO:0000305" key="7"/>
<name>XIN1_MYCMD</name>
<organism>
    <name type="scientific">Mycosarcoma maydis</name>
    <name type="common">Corn smut fungus</name>
    <name type="synonym">Ustilago maydis</name>
    <dbReference type="NCBI Taxonomy" id="5270"/>
    <lineage>
        <taxon>Eukaryota</taxon>
        <taxon>Fungi</taxon>
        <taxon>Dikarya</taxon>
        <taxon>Basidiomycota</taxon>
        <taxon>Ustilaginomycotina</taxon>
        <taxon>Ustilaginomycetes</taxon>
        <taxon>Ustilaginales</taxon>
        <taxon>Ustilaginaceae</taxon>
        <taxon>Mycosarcoma</taxon>
    </lineage>
</organism>
<gene>
    <name type="ORF">UMAG_03411</name>
</gene>
<dbReference type="EC" id="3.2.1.8"/>
<dbReference type="EMBL" id="CM003148">
    <property type="protein sequence ID" value="KIS68312.1"/>
    <property type="molecule type" value="Genomic_DNA"/>
</dbReference>
<dbReference type="RefSeq" id="XP_011389883.1">
    <property type="nucleotide sequence ID" value="XM_011391581.1"/>
</dbReference>
<dbReference type="SMR" id="Q4P902"/>
<dbReference type="STRING" id="237631.Q4P902"/>
<dbReference type="EnsemblFungi" id="KIS68312">
    <property type="protein sequence ID" value="KIS68312"/>
    <property type="gene ID" value="UMAG_03411"/>
</dbReference>
<dbReference type="GeneID" id="23563870"/>
<dbReference type="KEGG" id="uma:UMAG_03411"/>
<dbReference type="VEuPathDB" id="FungiDB:UMAG_03411"/>
<dbReference type="eggNOG" id="ENOG502QSCW">
    <property type="taxonomic scope" value="Eukaryota"/>
</dbReference>
<dbReference type="HOGENOM" id="CLU_020161_5_0_1"/>
<dbReference type="InParanoid" id="Q4P902"/>
<dbReference type="OMA" id="WGLNYPK"/>
<dbReference type="OrthoDB" id="3055998at2759"/>
<dbReference type="UniPathway" id="UPA00114"/>
<dbReference type="PHI-base" id="PHI:12059"/>
<dbReference type="Proteomes" id="UP000000561">
    <property type="component" value="Chromosome 9"/>
</dbReference>
<dbReference type="GO" id="GO:0005576">
    <property type="term" value="C:extracellular region"/>
    <property type="evidence" value="ECO:0007669"/>
    <property type="project" value="UniProtKB-SubCell"/>
</dbReference>
<dbReference type="GO" id="GO:0031176">
    <property type="term" value="F:endo-1,4-beta-xylanase activity"/>
    <property type="evidence" value="ECO:0007669"/>
    <property type="project" value="UniProtKB-EC"/>
</dbReference>
<dbReference type="GO" id="GO:0045493">
    <property type="term" value="P:xylan catabolic process"/>
    <property type="evidence" value="ECO:0007669"/>
    <property type="project" value="UniProtKB-UniPathway"/>
</dbReference>
<dbReference type="Gene3D" id="3.20.20.80">
    <property type="entry name" value="Glycosidases"/>
    <property type="match status" value="1"/>
</dbReference>
<dbReference type="InterPro" id="IPR044846">
    <property type="entry name" value="GH10"/>
</dbReference>
<dbReference type="InterPro" id="IPR001000">
    <property type="entry name" value="GH10_dom"/>
</dbReference>
<dbReference type="InterPro" id="IPR017853">
    <property type="entry name" value="Glycoside_hydrolase_SF"/>
</dbReference>
<dbReference type="PANTHER" id="PTHR31490:SF76">
    <property type="entry name" value="ENDO-1,4-BETA-XYLANASE C"/>
    <property type="match status" value="1"/>
</dbReference>
<dbReference type="PANTHER" id="PTHR31490">
    <property type="entry name" value="GLYCOSYL HYDROLASE"/>
    <property type="match status" value="1"/>
</dbReference>
<dbReference type="Pfam" id="PF00331">
    <property type="entry name" value="Glyco_hydro_10"/>
    <property type="match status" value="1"/>
</dbReference>
<dbReference type="PRINTS" id="PR00134">
    <property type="entry name" value="GLHYDRLASE10"/>
</dbReference>
<dbReference type="SMART" id="SM00633">
    <property type="entry name" value="Glyco_10"/>
    <property type="match status" value="1"/>
</dbReference>
<dbReference type="SUPFAM" id="SSF51445">
    <property type="entry name" value="(Trans)glycosidases"/>
    <property type="match status" value="1"/>
</dbReference>
<dbReference type="PROSITE" id="PS51760">
    <property type="entry name" value="GH10_2"/>
    <property type="match status" value="1"/>
</dbReference>
<comment type="function">
    <text>Endo-1,4-beta-xylanase involved in the hydrolysis of xylan, a major structural heterogeneous polysaccharide found in plant biomass representing the second most abundant polysaccharide in the biosphere, after cellulose.</text>
</comment>
<comment type="catalytic activity">
    <reaction>
        <text>Endohydrolysis of (1-&gt;4)-beta-D-xylosidic linkages in xylans.</text>
        <dbReference type="EC" id="3.2.1.8"/>
    </reaction>
</comment>
<comment type="pathway">
    <text>Glycan degradation; xylan degradation.</text>
</comment>
<comment type="subcellular location">
    <subcellularLocation>
        <location evidence="6">Secreted</location>
    </subcellularLocation>
</comment>
<comment type="induction">
    <text evidence="4 5">Induced in presence of Zea mays leaves and by xylan, and repressed by glucose. SNF1 acts as a positive regulator through the release of glucose repression.</text>
</comment>
<comment type="similarity">
    <text evidence="7">Belongs to the glycosyl hydrolase 10 (cellulase F) family.</text>
</comment>
<proteinExistence type="evidence at protein level"/>
<reference key="1">
    <citation type="journal article" date="2006" name="Nature">
        <title>Insights from the genome of the biotrophic fungal plant pathogen Ustilago maydis.</title>
        <authorList>
            <person name="Kaemper J."/>
            <person name="Kahmann R."/>
            <person name="Boelker M."/>
            <person name="Ma L.-J."/>
            <person name="Brefort T."/>
            <person name="Saville B.J."/>
            <person name="Banuett F."/>
            <person name="Kronstad J.W."/>
            <person name="Gold S.E."/>
            <person name="Mueller O."/>
            <person name="Perlin M.H."/>
            <person name="Woesten H.A.B."/>
            <person name="de Vries R."/>
            <person name="Ruiz-Herrera J."/>
            <person name="Reynaga-Pena C.G."/>
            <person name="Snetselaar K."/>
            <person name="McCann M."/>
            <person name="Perez-Martin J."/>
            <person name="Feldbruegge M."/>
            <person name="Basse C.W."/>
            <person name="Steinberg G."/>
            <person name="Ibeas J.I."/>
            <person name="Holloman W."/>
            <person name="Guzman P."/>
            <person name="Farman M.L."/>
            <person name="Stajich J.E."/>
            <person name="Sentandreu R."/>
            <person name="Gonzalez-Prieto J.M."/>
            <person name="Kennell J.C."/>
            <person name="Molina L."/>
            <person name="Schirawski J."/>
            <person name="Mendoza-Mendoza A."/>
            <person name="Greilinger D."/>
            <person name="Muench K."/>
            <person name="Roessel N."/>
            <person name="Scherer M."/>
            <person name="Vranes M."/>
            <person name="Ladendorf O."/>
            <person name="Vincon V."/>
            <person name="Fuchs U."/>
            <person name="Sandrock B."/>
            <person name="Meng S."/>
            <person name="Ho E.C.H."/>
            <person name="Cahill M.J."/>
            <person name="Boyce K.J."/>
            <person name="Klose J."/>
            <person name="Klosterman S.J."/>
            <person name="Deelstra H.J."/>
            <person name="Ortiz-Castellanos L."/>
            <person name="Li W."/>
            <person name="Sanchez-Alonso P."/>
            <person name="Schreier P.H."/>
            <person name="Haeuser-Hahn I."/>
            <person name="Vaupel M."/>
            <person name="Koopmann E."/>
            <person name="Friedrich G."/>
            <person name="Voss H."/>
            <person name="Schlueter T."/>
            <person name="Margolis J."/>
            <person name="Platt D."/>
            <person name="Swimmer C."/>
            <person name="Gnirke A."/>
            <person name="Chen F."/>
            <person name="Vysotskaia V."/>
            <person name="Mannhaupt G."/>
            <person name="Gueldener U."/>
            <person name="Muensterkoetter M."/>
            <person name="Haase D."/>
            <person name="Oesterheld M."/>
            <person name="Mewes H.-W."/>
            <person name="Mauceli E.W."/>
            <person name="DeCaprio D."/>
            <person name="Wade C.M."/>
            <person name="Butler J."/>
            <person name="Young S.K."/>
            <person name="Jaffe D.B."/>
            <person name="Calvo S.E."/>
            <person name="Nusbaum C."/>
            <person name="Galagan J.E."/>
            <person name="Birren B.W."/>
        </authorList>
    </citation>
    <scope>NUCLEOTIDE SEQUENCE [LARGE SCALE GENOMIC DNA]</scope>
    <source>
        <strain>DSM 14603 / FGSC 9021 / UM521</strain>
    </source>
</reference>
<reference key="2">
    <citation type="submission" date="2014-09" db="EMBL/GenBank/DDBJ databases">
        <authorList>
            <person name="Gueldener U."/>
            <person name="Muensterkoetter M."/>
            <person name="Walter M.C."/>
            <person name="Mannhaupt G."/>
            <person name="Kahmann R."/>
        </authorList>
    </citation>
    <scope>GENOME REANNOTATION</scope>
    <source>
        <strain>DSM 14603 / FGSC 9021 / UM521</strain>
    </source>
</reference>
<reference key="3">
    <citation type="journal article" date="2000" name="Fungal Genet. Biol.">
        <title>Induction of lytic enzymes by the interaction of Ustilago maydis with Zea mays tissues.</title>
        <authorList>
            <person name="Cano-Canchola C."/>
            <person name="Acevedo L."/>
            <person name="Ponce-Noyola P."/>
            <person name="Flores-Martinez A."/>
            <person name="Flores-Carreon A."/>
            <person name="Leal-Morales C.A."/>
        </authorList>
    </citation>
    <scope>INDUCTION</scope>
</reference>
<reference key="4">
    <citation type="journal article" date="2010" name="Phytopathology">
        <title>The snf1 gene of Ustilago maydis acts as a dual regulator of cell wall degrading enzymes.</title>
        <authorList>
            <person name="Nadal M."/>
            <person name="Garcia-Pedrajas M.D."/>
            <person name="Gold S.E."/>
        </authorList>
    </citation>
    <scope>INDUCTION</scope>
</reference>
<reference key="5">
    <citation type="journal article" date="2012" name="BMC Genomics">
        <title>Post-genomic analyses of fungal lignocellulosic biomass degradation reveal the unexpected potential of the plant pathogen Ustilago maydis.</title>
        <authorList>
            <person name="Couturier M."/>
            <person name="Navarro D."/>
            <person name="Olive C."/>
            <person name="Chevret D."/>
            <person name="Haon M."/>
            <person name="Favel A."/>
            <person name="Lesage-Meessen L."/>
            <person name="Henrissat B."/>
            <person name="Coutinho P.M."/>
            <person name="Berrin J.G."/>
        </authorList>
    </citation>
    <scope>SUBCELLULAR LOCATION</scope>
    <scope>IDENTIFICATION BY MASS SPECTROMETRY</scope>
</reference>
<feature type="signal peptide" evidence="2">
    <location>
        <begin position="1"/>
        <end position="21"/>
    </location>
</feature>
<feature type="chain" id="PRO_0000429749" description="Endo-1,4-beta-xylanase UM03411">
    <location>
        <begin position="22"/>
        <end position="344"/>
    </location>
</feature>
<feature type="domain" description="GH10" evidence="3">
    <location>
        <begin position="35"/>
        <end position="338"/>
    </location>
</feature>
<feature type="active site" description="Proton donor" evidence="1">
    <location>
        <position position="166"/>
    </location>
</feature>
<feature type="active site" description="Nucleophile" evidence="1">
    <location>
        <position position="275"/>
    </location>
</feature>
<feature type="glycosylation site" description="N-linked (GlcNAc...) asparagine" evidence="2">
    <location>
        <position position="171"/>
    </location>
</feature>
<feature type="glycosylation site" description="N-linked (GlcNAc...) asparagine" evidence="2">
    <location>
        <position position="310"/>
    </location>
</feature>
<feature type="glycosylation site" description="N-linked (GlcNAc...) asparagine" evidence="2">
    <location>
        <position position="323"/>
    </location>
</feature>
<feature type="disulfide bond" evidence="1">
    <location>
        <begin position="293"/>
        <end position="299"/>
    </location>
</feature>
<protein>
    <recommendedName>
        <fullName>Endo-1,4-beta-xylanase UM03411</fullName>
        <shortName>Xylanase UM03411</shortName>
        <ecNumber>3.2.1.8</ecNumber>
    </recommendedName>
    <alternativeName>
        <fullName>1,4-beta-D-xylan xylanohydrolase UM03411</fullName>
    </alternativeName>
</protein>
<sequence>MKTNFLVLLSALLAASSAVTATLIPAKCKHEAFSQRAGSSLNAAIKSDGRKYFGTCADPGTLGNWQISNIIKAEMGQVTPENSMKWDATQPQRGTFNFGNADRLVDFATSNGKLIRGHTLVWHSQLPSWVSSITDANDLTNVIQNRIATVVGRYKGKVYAWDVVNEMFNENGSFRESVFYKLLGEDFVKIAFEAARKADPNAKLYINDYNLDDPDYPKLKSLVANVKKWRSQGVPIDGIGSQSHLQAAGHFLDASKVGGAMQALCAAASECAMTELDIAQASPDQYTKATEACLNQKNCVGITVWGVSDNTSWRKNANPLLWNSSYQKKPAYNAVLSTLNSYQA</sequence>